<feature type="chain" id="PRO_0000432533" description="Portal protein">
    <location>
        <begin position="1"/>
        <end position="511"/>
    </location>
</feature>
<dbReference type="EMBL" id="AY283928">
    <property type="protein sequence ID" value="AAQ64427.1"/>
    <property type="molecule type" value="Genomic_DNA"/>
</dbReference>
<dbReference type="RefSeq" id="NP_899604.1">
    <property type="nucleotide sequence ID" value="NC_005083.2"/>
</dbReference>
<dbReference type="SMR" id="Q6WHE6"/>
<dbReference type="GeneID" id="2546036"/>
<dbReference type="KEGG" id="vg:2546036"/>
<dbReference type="OrthoDB" id="2332at10239"/>
<dbReference type="Proteomes" id="UP000001785">
    <property type="component" value="Genome"/>
</dbReference>
<dbReference type="GO" id="GO:0019028">
    <property type="term" value="C:viral capsid"/>
    <property type="evidence" value="ECO:0007669"/>
    <property type="project" value="UniProtKB-UniRule"/>
</dbReference>
<dbReference type="GO" id="GO:0099000">
    <property type="term" value="P:symbiont genome ejection through host cell envelope, contractile tail mechanism"/>
    <property type="evidence" value="ECO:0007669"/>
    <property type="project" value="UniProtKB-UniRule"/>
</dbReference>
<dbReference type="GO" id="GO:0019072">
    <property type="term" value="P:viral genome packaging"/>
    <property type="evidence" value="ECO:0007669"/>
    <property type="project" value="UniProtKB-UniRule"/>
</dbReference>
<dbReference type="GO" id="GO:0019076">
    <property type="term" value="P:viral release from host cell"/>
    <property type="evidence" value="ECO:0007669"/>
    <property type="project" value="UniProtKB-UniRule"/>
</dbReference>
<dbReference type="HAMAP" id="MF_04114">
    <property type="entry name" value="PORTAL_T4"/>
    <property type="match status" value="1"/>
</dbReference>
<dbReference type="InterPro" id="IPR010823">
    <property type="entry name" value="Portal_Gp20"/>
</dbReference>
<dbReference type="Pfam" id="PF07230">
    <property type="entry name" value="Portal_T4"/>
    <property type="match status" value="1"/>
</dbReference>
<protein>
    <recommendedName>
        <fullName evidence="1">Portal protein</fullName>
    </recommendedName>
    <alternativeName>
        <fullName evidence="1">gp20</fullName>
    </alternativeName>
</protein>
<organism evidence="3">
    <name type="scientific">Vibrio phage KVP40 (isolate Vibrio parahaemolyticus/Japan/Matsuzaki/1991)</name>
    <name type="common">KVP40</name>
    <name type="synonym">Bacteriophage KVP40</name>
    <dbReference type="NCBI Taxonomy" id="75320"/>
    <lineage>
        <taxon>Viruses</taxon>
        <taxon>Duplodnaviria</taxon>
        <taxon>Heunggongvirae</taxon>
        <taxon>Uroviricota</taxon>
        <taxon>Caudoviricetes</taxon>
        <taxon>Straboviridae</taxon>
        <taxon>Schizotequatrovirus</taxon>
        <taxon>Schizotequatrovirus KVP40</taxon>
    </lineage>
</organism>
<evidence type="ECO:0000255" key="1">
    <source>
        <dbReference type="HAMAP-Rule" id="MF_04114"/>
    </source>
</evidence>
<evidence type="ECO:0000312" key="2">
    <source>
        <dbReference type="EMBL" id="AAQ64427.1"/>
    </source>
</evidence>
<evidence type="ECO:0000312" key="3">
    <source>
        <dbReference type="Proteomes" id="UP000001785"/>
    </source>
</evidence>
<keyword id="KW-0167">Capsid protein</keyword>
<keyword id="KW-0426">Late protein</keyword>
<keyword id="KW-1185">Reference proteome</keyword>
<keyword id="KW-0118">Viral capsid assembly</keyword>
<keyword id="KW-1242">Viral contractile tail ejection system</keyword>
<keyword id="KW-1171">Viral genome ejection through host cell envelope</keyword>
<keyword id="KW-0231">Viral genome packaging</keyword>
<keyword id="KW-1162">Viral penetration into host cytoplasm</keyword>
<keyword id="KW-1188">Viral release from host cell</keyword>
<keyword id="KW-0946">Virion</keyword>
<keyword id="KW-1160">Virus entry into host cell</keyword>
<gene>
    <name evidence="2" type="primary">20</name>
    <name evidence="2" type="ordered locus">KVP40.0358</name>
</gene>
<comment type="function">
    <text evidence="1">Forms the portal vertex of the capsid. This portal plays critical roles in head assembly, genome packaging, neck/tail attachment, and genome ejection. The portal protein multimerizes as a single ring-shaped homododecamer arranged around a central channel. Binds to the terminase subunits to form the packaging machine.</text>
</comment>
<comment type="subunit">
    <text evidence="1">Homododecamer. Interacts with the large terminase subunit. Interacts with the major capsid protein. Interacts with the capsid vertex protein.</text>
</comment>
<comment type="subcellular location">
    <subcellularLocation>
        <location evidence="1">Virion</location>
    </subcellularLocation>
    <text evidence="1">Located at a unique 5-fold vertex of the icosahedral capsid.</text>
</comment>
<comment type="similarity">
    <text evidence="1">Belongs to the Tevenvirinae portal protein family.</text>
</comment>
<accession>Q6WHE6</accession>
<reference key="1">
    <citation type="journal article" date="2003" name="J. Bacteriol.">
        <title>Complete genome sequence of the broad-host-range vibriophage KVP40: comparative genomics of a T4-related bacteriophage.</title>
        <authorList>
            <person name="Miller E.S."/>
            <person name="Heidelberg J.F."/>
            <person name="Eisen J.A."/>
            <person name="Nelson W.C."/>
            <person name="Durkin A.S."/>
            <person name="Ciecko A."/>
            <person name="Feldblyum T.V."/>
            <person name="White O."/>
            <person name="Paulsen I.T."/>
            <person name="Nierman W.C."/>
            <person name="Lee J."/>
            <person name="Szczypinski B."/>
            <person name="Fraser C.M."/>
        </authorList>
    </citation>
    <scope>NUCLEOTIDE SEQUENCE [LARGE SCALE GENOMIC DNA]</scope>
    <source>
        <strain evidence="3">Isolate Vibrio parahaemolyticus/Japan/Matsuzaki /1991</strain>
    </source>
</reference>
<organismHost>
    <name type="scientific">Vibrio parahaemolyticus</name>
    <dbReference type="NCBI Taxonomy" id="670"/>
</organismHost>
<proteinExistence type="inferred from homology"/>
<sequence length="511" mass="59423">MKFWTKEEEQDIQKIEKNPVRSFSAPDNVDGAKEIHTNLLAPQLGHAIIPSDAQSEGTIPVKELIKSYRALAEYHEVDDAIQEIVDEAIVYENDKEVVWLNLDNTDFSENIKAKINEEFDRVVSLLQMRKHGYKWFRKWYVDSRIYFHKILDKDNNIIELRPLNPMKMELVREIQKETIDGVEVVKGTLEYYVYKQSDYKMPSWMSATNRAQTSFRIPKDAIVFAHSGLMRGCADDPYIIGYLDRAIKPANQLKMLEDALVIYRLARAPERRVFYVDVGNLPTQKAQQYVNGIMQNVKNRVVYDTQTGQVKNTTNAMSMLEDYYLPRREGSKGTEVSTLPGGQSLGDIEDVLYFNRKLYKAMRIPTSRAASEDQTGGINFGQGAEITRDELKFTKFVKRLQTKFETVITDPLKHQLIVNNIITEEEWDANHEKLYVVFNQDSYFEEAKELEILNSRMNAMRDIQDYAGKYYSHKYIQKNILRLSDDQITAMQSEIDEEETNPRFQQDDQGF</sequence>
<name>PORTL_BPKVM</name>